<feature type="chain" id="PRO_0000420420" description="Pyrophosphate--fructose 6-phosphate 1-phosphotransferase subunit beta 2">
    <location>
        <begin position="1"/>
        <end position="569"/>
    </location>
</feature>
<feature type="active site" description="Proton acceptor" evidence="1">
    <location>
        <position position="231"/>
    </location>
</feature>
<feature type="binding site" evidence="1">
    <location>
        <position position="107"/>
    </location>
    <ligand>
        <name>diphosphate</name>
        <dbReference type="ChEBI" id="CHEBI:33019"/>
    </ligand>
</feature>
<feature type="binding site" evidence="1">
    <location>
        <position position="201"/>
    </location>
    <ligand>
        <name>Mg(2+)</name>
        <dbReference type="ChEBI" id="CHEBI:18420"/>
        <note>catalytic</note>
    </ligand>
</feature>
<feature type="binding site" description="in other chain" evidence="1">
    <location>
        <begin position="229"/>
        <end position="231"/>
    </location>
    <ligand>
        <name>substrate</name>
        <note>ligand shared between dimeric partners</note>
    </ligand>
</feature>
<feature type="binding site" evidence="1">
    <location>
        <begin position="268"/>
        <end position="269"/>
    </location>
    <ligand>
        <name>substrate</name>
        <note>ligand shared between dimeric partners</note>
    </ligand>
</feature>
<feature type="binding site" description="in other chain" evidence="1">
    <location>
        <begin position="276"/>
        <end position="278"/>
    </location>
    <ligand>
        <name>substrate</name>
        <note>ligand shared between dimeric partners</note>
    </ligand>
</feature>
<feature type="binding site" description="in other chain" evidence="1">
    <location>
        <position position="337"/>
    </location>
    <ligand>
        <name>substrate</name>
        <note>ligand shared between dimeric partners</note>
    </ligand>
</feature>
<feature type="binding site" description="in other chain" evidence="1">
    <location>
        <begin position="442"/>
        <end position="445"/>
    </location>
    <ligand>
        <name>substrate</name>
        <note>ligand shared between dimeric partners</note>
    </ligand>
</feature>
<feature type="site" description="Important for catalytic activity and substrate specificity; stabilizes the transition state when the phosphoryl donor is PPi; prevents ATP from binding by mimicking the alpha-phosphate group of ATP" evidence="1">
    <location>
        <position position="202"/>
    </location>
</feature>
<feature type="site" description="Important for catalytic activity; stabilizes the transition state when the phosphoryl donor is PPi" evidence="1">
    <location>
        <position position="228"/>
    </location>
</feature>
<gene>
    <name evidence="1" type="primary">PFP-BETA2</name>
    <name type="synonym">MEE51</name>
    <name type="ordered locus">At4g04040</name>
    <name type="ORF">T24H24.15</name>
</gene>
<dbReference type="EC" id="2.7.1.90" evidence="1"/>
<dbReference type="EMBL" id="AF075598">
    <property type="protein sequence ID" value="AAC28214.1"/>
    <property type="status" value="ALT_SEQ"/>
    <property type="molecule type" value="Genomic_DNA"/>
</dbReference>
<dbReference type="EMBL" id="AL161499">
    <property type="protein sequence ID" value="CAB77872.1"/>
    <property type="status" value="ALT_SEQ"/>
    <property type="molecule type" value="Genomic_DNA"/>
</dbReference>
<dbReference type="EMBL" id="CP002687">
    <property type="protein sequence ID" value="AEE82365.1"/>
    <property type="molecule type" value="Genomic_DNA"/>
</dbReference>
<dbReference type="PIR" id="T01470">
    <property type="entry name" value="T01470"/>
</dbReference>
<dbReference type="RefSeq" id="NP_192313.3">
    <property type="nucleotide sequence ID" value="NM_116642.4"/>
</dbReference>
<dbReference type="SMR" id="F4JGR5"/>
<dbReference type="BioGRID" id="11029">
    <property type="interactions" value="2"/>
</dbReference>
<dbReference type="FunCoup" id="F4JGR5">
    <property type="interactions" value="242"/>
</dbReference>
<dbReference type="STRING" id="3702.F4JGR5"/>
<dbReference type="iPTMnet" id="F4JGR5"/>
<dbReference type="PaxDb" id="3702-AT4G04040.1"/>
<dbReference type="ProteomicsDB" id="234990"/>
<dbReference type="EnsemblPlants" id="AT4G04040.1">
    <property type="protein sequence ID" value="AT4G04040.1"/>
    <property type="gene ID" value="AT4G04040"/>
</dbReference>
<dbReference type="GeneID" id="825716"/>
<dbReference type="Gramene" id="AT4G04040.1">
    <property type="protein sequence ID" value="AT4G04040.1"/>
    <property type="gene ID" value="AT4G04040"/>
</dbReference>
<dbReference type="KEGG" id="ath:AT4G04040"/>
<dbReference type="Araport" id="AT4G04040"/>
<dbReference type="TAIR" id="AT4G04040">
    <property type="gene designation" value="MEE51"/>
</dbReference>
<dbReference type="eggNOG" id="KOG2440">
    <property type="taxonomic scope" value="Eukaryota"/>
</dbReference>
<dbReference type="HOGENOM" id="CLU_022288_0_1_1"/>
<dbReference type="InParanoid" id="F4JGR5"/>
<dbReference type="OMA" id="GPIQFKG"/>
<dbReference type="UniPathway" id="UPA00109">
    <property type="reaction ID" value="UER00182"/>
</dbReference>
<dbReference type="PRO" id="PR:F4JGR5"/>
<dbReference type="Proteomes" id="UP000006548">
    <property type="component" value="Chromosome 4"/>
</dbReference>
<dbReference type="ExpressionAtlas" id="F4JGR5">
    <property type="expression patterns" value="baseline and differential"/>
</dbReference>
<dbReference type="GO" id="GO:0005737">
    <property type="term" value="C:cytoplasm"/>
    <property type="evidence" value="ECO:0007669"/>
    <property type="project" value="UniProtKB-SubCell"/>
</dbReference>
<dbReference type="GO" id="GO:0003872">
    <property type="term" value="F:6-phosphofructokinase activity"/>
    <property type="evidence" value="ECO:0007669"/>
    <property type="project" value="UniProtKB-UniRule"/>
</dbReference>
<dbReference type="GO" id="GO:0005524">
    <property type="term" value="F:ATP binding"/>
    <property type="evidence" value="ECO:0007669"/>
    <property type="project" value="InterPro"/>
</dbReference>
<dbReference type="GO" id="GO:0047334">
    <property type="term" value="F:diphosphate-fructose-6-phosphate 1-phosphotransferase activity"/>
    <property type="evidence" value="ECO:0000315"/>
    <property type="project" value="TAIR"/>
</dbReference>
<dbReference type="GO" id="GO:0046872">
    <property type="term" value="F:metal ion binding"/>
    <property type="evidence" value="ECO:0007669"/>
    <property type="project" value="UniProtKB-KW"/>
</dbReference>
<dbReference type="GO" id="GO:0009793">
    <property type="term" value="P:embryo development ending in seed dormancy"/>
    <property type="evidence" value="ECO:0000315"/>
    <property type="project" value="TAIR"/>
</dbReference>
<dbReference type="GO" id="GO:0006002">
    <property type="term" value="P:fructose 6-phosphate metabolic process"/>
    <property type="evidence" value="ECO:0007669"/>
    <property type="project" value="InterPro"/>
</dbReference>
<dbReference type="GO" id="GO:0015979">
    <property type="term" value="P:photosynthesis"/>
    <property type="evidence" value="ECO:0000315"/>
    <property type="project" value="TAIR"/>
</dbReference>
<dbReference type="FunFam" id="1.10.10.480:FF:000002">
    <property type="entry name" value="Pyrophosphate--fructose 6-phosphate 1-phosphotransferase subunit beta"/>
    <property type="match status" value="1"/>
</dbReference>
<dbReference type="Gene3D" id="3.40.50.450">
    <property type="match status" value="1"/>
</dbReference>
<dbReference type="Gene3D" id="3.40.50.460">
    <property type="entry name" value="Phosphofructokinase domain"/>
    <property type="match status" value="1"/>
</dbReference>
<dbReference type="Gene3D" id="1.10.10.480">
    <property type="entry name" value="Phosphofructokinase, domain 3"/>
    <property type="match status" value="1"/>
</dbReference>
<dbReference type="HAMAP" id="MF_01980">
    <property type="entry name" value="Phosphofructokinase_II_Long"/>
    <property type="match status" value="1"/>
</dbReference>
<dbReference type="InterPro" id="IPR022953">
    <property type="entry name" value="ATP_PFK"/>
</dbReference>
<dbReference type="InterPro" id="IPR011183">
    <property type="entry name" value="PfpB_PPi_PFK"/>
</dbReference>
<dbReference type="InterPro" id="IPR000023">
    <property type="entry name" value="Phosphofructokinase_dom"/>
</dbReference>
<dbReference type="InterPro" id="IPR035966">
    <property type="entry name" value="PKF_sf"/>
</dbReference>
<dbReference type="NCBIfam" id="TIGR02477">
    <property type="entry name" value="PFKA_PPi"/>
    <property type="match status" value="1"/>
</dbReference>
<dbReference type="NCBIfam" id="NF005482">
    <property type="entry name" value="PRK07085.1"/>
    <property type="match status" value="1"/>
</dbReference>
<dbReference type="PANTHER" id="PTHR43650">
    <property type="entry name" value="PYROPHOSPHATE--FRUCTOSE 6-PHOSPHATE 1-PHOSPHOTRANSFERASE"/>
    <property type="match status" value="1"/>
</dbReference>
<dbReference type="PANTHER" id="PTHR43650:SF1">
    <property type="entry name" value="PYROPHOSPHATE--FRUCTOSE 6-PHOSPHATE 1-PHOSPHOTRANSFERASE SUBUNIT BETA 2"/>
    <property type="match status" value="1"/>
</dbReference>
<dbReference type="Pfam" id="PF00365">
    <property type="entry name" value="PFK"/>
    <property type="match status" value="1"/>
</dbReference>
<dbReference type="PIRSF" id="PIRSF005677">
    <property type="entry name" value="PPi_PFK_PfpB"/>
    <property type="match status" value="1"/>
</dbReference>
<dbReference type="PRINTS" id="PR00476">
    <property type="entry name" value="PHFRCTKINASE"/>
</dbReference>
<dbReference type="SUPFAM" id="SSF53784">
    <property type="entry name" value="Phosphofructokinase"/>
    <property type="match status" value="1"/>
</dbReference>
<protein>
    <recommendedName>
        <fullName evidence="1">Pyrophosphate--fructose 6-phosphate 1-phosphotransferase subunit beta 2</fullName>
        <shortName evidence="1">PFP 2</shortName>
        <ecNumber evidence="1">2.7.1.90</ecNumber>
    </recommendedName>
    <alternativeName>
        <fullName evidence="1">6-phosphofructokinase, pyrophosphate dependent 2</fullName>
    </alternativeName>
    <alternativeName>
        <fullName evidence="1">PPi-PFK 2</fullName>
    </alternativeName>
    <alternativeName>
        <fullName>Protein MATERNAL EFFECT EMBRYO ARREST 51</fullName>
    </alternativeName>
    <alternativeName>
        <fullName evidence="1">Pyrophosphate-dependent 6-phosphofructose-1-kinase 2</fullName>
    </alternativeName>
</protein>
<keyword id="KW-0021">Allosteric enzyme</keyword>
<keyword id="KW-0963">Cytoplasm</keyword>
<keyword id="KW-0324">Glycolysis</keyword>
<keyword id="KW-0418">Kinase</keyword>
<keyword id="KW-0460">Magnesium</keyword>
<keyword id="KW-0479">Metal-binding</keyword>
<keyword id="KW-1185">Reference proteome</keyword>
<keyword id="KW-0808">Transferase</keyword>
<reference key="1">
    <citation type="journal article" date="1999" name="Nature">
        <title>Sequence and analysis of chromosome 4 of the plant Arabidopsis thaliana.</title>
        <authorList>
            <person name="Mayer K.F.X."/>
            <person name="Schueller C."/>
            <person name="Wambutt R."/>
            <person name="Murphy G."/>
            <person name="Volckaert G."/>
            <person name="Pohl T."/>
            <person name="Duesterhoeft A."/>
            <person name="Stiekema W."/>
            <person name="Entian K.-D."/>
            <person name="Terryn N."/>
            <person name="Harris B."/>
            <person name="Ansorge W."/>
            <person name="Brandt P."/>
            <person name="Grivell L.A."/>
            <person name="Rieger M."/>
            <person name="Weichselgartner M."/>
            <person name="de Simone V."/>
            <person name="Obermaier B."/>
            <person name="Mache R."/>
            <person name="Mueller M."/>
            <person name="Kreis M."/>
            <person name="Delseny M."/>
            <person name="Puigdomenech P."/>
            <person name="Watson M."/>
            <person name="Schmidtheini T."/>
            <person name="Reichert B."/>
            <person name="Portetelle D."/>
            <person name="Perez-Alonso M."/>
            <person name="Boutry M."/>
            <person name="Bancroft I."/>
            <person name="Vos P."/>
            <person name="Hoheisel J."/>
            <person name="Zimmermann W."/>
            <person name="Wedler H."/>
            <person name="Ridley P."/>
            <person name="Langham S.-A."/>
            <person name="McCullagh B."/>
            <person name="Bilham L."/>
            <person name="Robben J."/>
            <person name="van der Schueren J."/>
            <person name="Grymonprez B."/>
            <person name="Chuang Y.-J."/>
            <person name="Vandenbussche F."/>
            <person name="Braeken M."/>
            <person name="Weltjens I."/>
            <person name="Voet M."/>
            <person name="Bastiaens I."/>
            <person name="Aert R."/>
            <person name="Defoor E."/>
            <person name="Weitzenegger T."/>
            <person name="Bothe G."/>
            <person name="Ramsperger U."/>
            <person name="Hilbert H."/>
            <person name="Braun M."/>
            <person name="Holzer E."/>
            <person name="Brandt A."/>
            <person name="Peters S."/>
            <person name="van Staveren M."/>
            <person name="Dirkse W."/>
            <person name="Mooijman P."/>
            <person name="Klein Lankhorst R."/>
            <person name="Rose M."/>
            <person name="Hauf J."/>
            <person name="Koetter P."/>
            <person name="Berneiser S."/>
            <person name="Hempel S."/>
            <person name="Feldpausch M."/>
            <person name="Lamberth S."/>
            <person name="Van den Daele H."/>
            <person name="De Keyser A."/>
            <person name="Buysshaert C."/>
            <person name="Gielen J."/>
            <person name="Villarroel R."/>
            <person name="De Clercq R."/>
            <person name="van Montagu M."/>
            <person name="Rogers J."/>
            <person name="Cronin A."/>
            <person name="Quail M.A."/>
            <person name="Bray-Allen S."/>
            <person name="Clark L."/>
            <person name="Doggett J."/>
            <person name="Hall S."/>
            <person name="Kay M."/>
            <person name="Lennard N."/>
            <person name="McLay K."/>
            <person name="Mayes R."/>
            <person name="Pettett A."/>
            <person name="Rajandream M.A."/>
            <person name="Lyne M."/>
            <person name="Benes V."/>
            <person name="Rechmann S."/>
            <person name="Borkova D."/>
            <person name="Bloecker H."/>
            <person name="Scharfe M."/>
            <person name="Grimm M."/>
            <person name="Loehnert T.-H."/>
            <person name="Dose S."/>
            <person name="de Haan M."/>
            <person name="Maarse A.C."/>
            <person name="Schaefer M."/>
            <person name="Mueller-Auer S."/>
            <person name="Gabel C."/>
            <person name="Fuchs M."/>
            <person name="Fartmann B."/>
            <person name="Granderath K."/>
            <person name="Dauner D."/>
            <person name="Herzl A."/>
            <person name="Neumann S."/>
            <person name="Argiriou A."/>
            <person name="Vitale D."/>
            <person name="Liguori R."/>
            <person name="Piravandi E."/>
            <person name="Massenet O."/>
            <person name="Quigley F."/>
            <person name="Clabauld G."/>
            <person name="Muendlein A."/>
            <person name="Felber R."/>
            <person name="Schnabl S."/>
            <person name="Hiller R."/>
            <person name="Schmidt W."/>
            <person name="Lecharny A."/>
            <person name="Aubourg S."/>
            <person name="Chefdor F."/>
            <person name="Cooke R."/>
            <person name="Berger C."/>
            <person name="Monfort A."/>
            <person name="Casacuberta E."/>
            <person name="Gibbons T."/>
            <person name="Weber N."/>
            <person name="Vandenbol M."/>
            <person name="Bargues M."/>
            <person name="Terol J."/>
            <person name="Torres A."/>
            <person name="Perez-Perez A."/>
            <person name="Purnelle B."/>
            <person name="Bent E."/>
            <person name="Johnson S."/>
            <person name="Tacon D."/>
            <person name="Jesse T."/>
            <person name="Heijnen L."/>
            <person name="Schwarz S."/>
            <person name="Scholler P."/>
            <person name="Heber S."/>
            <person name="Francs P."/>
            <person name="Bielke C."/>
            <person name="Frishman D."/>
            <person name="Haase D."/>
            <person name="Lemcke K."/>
            <person name="Mewes H.-W."/>
            <person name="Stocker S."/>
            <person name="Zaccaria P."/>
            <person name="Bevan M."/>
            <person name="Wilson R.K."/>
            <person name="de la Bastide M."/>
            <person name="Habermann K."/>
            <person name="Parnell L."/>
            <person name="Dedhia N."/>
            <person name="Gnoj L."/>
            <person name="Schutz K."/>
            <person name="Huang E."/>
            <person name="Spiegel L."/>
            <person name="Sekhon M."/>
            <person name="Murray J."/>
            <person name="Sheet P."/>
            <person name="Cordes M."/>
            <person name="Abu-Threideh J."/>
            <person name="Stoneking T."/>
            <person name="Kalicki J."/>
            <person name="Graves T."/>
            <person name="Harmon G."/>
            <person name="Edwards J."/>
            <person name="Latreille P."/>
            <person name="Courtney L."/>
            <person name="Cloud J."/>
            <person name="Abbott A."/>
            <person name="Scott K."/>
            <person name="Johnson D."/>
            <person name="Minx P."/>
            <person name="Bentley D."/>
            <person name="Fulton B."/>
            <person name="Miller N."/>
            <person name="Greco T."/>
            <person name="Kemp K."/>
            <person name="Kramer J."/>
            <person name="Fulton L."/>
            <person name="Mardis E."/>
            <person name="Dante M."/>
            <person name="Pepin K."/>
            <person name="Hillier L.W."/>
            <person name="Nelson J."/>
            <person name="Spieth J."/>
            <person name="Ryan E."/>
            <person name="Andrews S."/>
            <person name="Geisel C."/>
            <person name="Layman D."/>
            <person name="Du H."/>
            <person name="Ali J."/>
            <person name="Berghoff A."/>
            <person name="Jones K."/>
            <person name="Drone K."/>
            <person name="Cotton M."/>
            <person name="Joshu C."/>
            <person name="Antonoiu B."/>
            <person name="Zidanic M."/>
            <person name="Strong C."/>
            <person name="Sun H."/>
            <person name="Lamar B."/>
            <person name="Yordan C."/>
            <person name="Ma P."/>
            <person name="Zhong J."/>
            <person name="Preston R."/>
            <person name="Vil D."/>
            <person name="Shekher M."/>
            <person name="Matero A."/>
            <person name="Shah R."/>
            <person name="Swaby I.K."/>
            <person name="O'Shaughnessy A."/>
            <person name="Rodriguez M."/>
            <person name="Hoffman J."/>
            <person name="Till S."/>
            <person name="Granat S."/>
            <person name="Shohdy N."/>
            <person name="Hasegawa A."/>
            <person name="Hameed A."/>
            <person name="Lodhi M."/>
            <person name="Johnson A."/>
            <person name="Chen E."/>
            <person name="Marra M.A."/>
            <person name="Martienssen R."/>
            <person name="McCombie W.R."/>
        </authorList>
    </citation>
    <scope>NUCLEOTIDE SEQUENCE [LARGE SCALE GENOMIC DNA]</scope>
    <source>
        <strain>cv. Columbia</strain>
    </source>
</reference>
<reference key="2">
    <citation type="journal article" date="2017" name="Plant J.">
        <title>Araport11: a complete reannotation of the Arabidopsis thaliana reference genome.</title>
        <authorList>
            <person name="Cheng C.Y."/>
            <person name="Krishnakumar V."/>
            <person name="Chan A.P."/>
            <person name="Thibaud-Nissen F."/>
            <person name="Schobel S."/>
            <person name="Town C.D."/>
        </authorList>
    </citation>
    <scope>GENOME REANNOTATION</scope>
    <source>
        <strain>cv. Columbia</strain>
    </source>
</reference>
<reference key="3">
    <citation type="journal article" date="2004" name="Trends Plant Sci.">
        <title>Fructose-2,6-bisphosphate: a traffic signal in plant metabolism.</title>
        <authorList>
            <person name="Nielsen T.H."/>
            <person name="Rung J.H."/>
            <person name="Villadsen D."/>
        </authorList>
    </citation>
    <scope>REVIEW</scope>
</reference>
<reference key="4">
    <citation type="journal article" date="2009" name="Mol. Cells">
        <title>Altered expression of pyrophosphate: fructose-6-phosphate 1-phosphotransferase affects the growth of transgenic Arabidopsis plants.</title>
        <authorList>
            <person name="Lim H."/>
            <person name="Cho M.-H."/>
            <person name="Jeon J.-S."/>
            <person name="Bhoo S.H."/>
            <person name="Kwon Y.-K."/>
            <person name="Hahn T.-R."/>
        </authorList>
    </citation>
    <scope>GENE FAMILY</scope>
    <scope>NOMENCLATURE</scope>
    <source>
        <strain>cv. Columbia</strain>
    </source>
</reference>
<accession>F4JGR5</accession>
<accession>O81437</accession>
<sequence length="569" mass="62742">MASQLDLIGGDYIAGISINPPTNSRVTSVYSEVQASRIDHTLPLPSVFKTPFKIIDGPPSSSAGHPEEIEKLFPNLFGQPSALLVPNQSNEVSSDQKLKIGVVLSGGQAPGGHNVICGIFDYLQEYARGSSLFGFRGGPAGIMKGKYIELTSEFVYPYRNQGGFDMICSGRDKIETPEQFKQAEETVTKMDLDGLVVIGGDDSNTNACLLAEHFRAKNMKTLVIGCPKTIDGDLKSKEVPTSFGFDTACKIYSEMIGNVMIDARSTGKYYHFVRLMGRAASHITLECALQTHPNITIIGEEVFEKKLTLKNVTDNIVDVIYKRAENGYNYGVILVPEGLIDFIPEVQQLISELNEVLAEGNVDEEGQWKKNLKKETLEIFEFLPQTIQEQLMLERDPHGNVQVAKIETEKMLIQMVETELEKKKTEGTYEREFMGKSHFFGYEGRCGLPTNFDATYCYALGYGAGSLLQSGKTGLISSVGNLAAPVEEWTVGGTALTSLMDVERRHGKFKPVIKKAMVELEGAPFKKFASQREEWALKNRYISPGPIQFKGPGSDARNHTLMLELGAQA</sequence>
<evidence type="ECO:0000255" key="1">
    <source>
        <dbReference type="HAMAP-Rule" id="MF_03185"/>
    </source>
</evidence>
<evidence type="ECO:0000305" key="2"/>
<proteinExistence type="inferred from homology"/>
<name>PFPB2_ARATH</name>
<organism>
    <name type="scientific">Arabidopsis thaliana</name>
    <name type="common">Mouse-ear cress</name>
    <dbReference type="NCBI Taxonomy" id="3702"/>
    <lineage>
        <taxon>Eukaryota</taxon>
        <taxon>Viridiplantae</taxon>
        <taxon>Streptophyta</taxon>
        <taxon>Embryophyta</taxon>
        <taxon>Tracheophyta</taxon>
        <taxon>Spermatophyta</taxon>
        <taxon>Magnoliopsida</taxon>
        <taxon>eudicotyledons</taxon>
        <taxon>Gunneridae</taxon>
        <taxon>Pentapetalae</taxon>
        <taxon>rosids</taxon>
        <taxon>malvids</taxon>
        <taxon>Brassicales</taxon>
        <taxon>Brassicaceae</taxon>
        <taxon>Camelineae</taxon>
        <taxon>Arabidopsis</taxon>
    </lineage>
</organism>
<comment type="function">
    <text evidence="1">Catalytic subunit of pyrophosphate--fructose 6-phosphate 1-phosphotransferase. Catalyzes the phosphorylation of D-fructose 6-phosphate, the first committing step of glycolysis. Uses inorganic phosphate (PPi) as phosphoryl donor instead of ATP like common ATP-dependent phosphofructokinases (ATP-PFKs), which renders the reaction reversible, and can thus function both in glycolysis and gluconeogenesis.</text>
</comment>
<comment type="catalytic activity">
    <reaction evidence="1">
        <text>beta-D-fructose 6-phosphate + diphosphate = beta-D-fructose 1,6-bisphosphate + phosphate + H(+)</text>
        <dbReference type="Rhea" id="RHEA:13613"/>
        <dbReference type="ChEBI" id="CHEBI:15378"/>
        <dbReference type="ChEBI" id="CHEBI:32966"/>
        <dbReference type="ChEBI" id="CHEBI:33019"/>
        <dbReference type="ChEBI" id="CHEBI:43474"/>
        <dbReference type="ChEBI" id="CHEBI:57634"/>
        <dbReference type="EC" id="2.7.1.90"/>
    </reaction>
</comment>
<comment type="cofactor">
    <cofactor evidence="1">
        <name>Mg(2+)</name>
        <dbReference type="ChEBI" id="CHEBI:18420"/>
    </cofactor>
</comment>
<comment type="activity regulation">
    <text evidence="1">Allosterically activated by fructose 2,6-bisphosphate.</text>
</comment>
<comment type="pathway">
    <text evidence="1">Carbohydrate degradation; glycolysis; D-glyceraldehyde 3-phosphate and glycerone phosphate from D-glucose: step 3/4.</text>
</comment>
<comment type="subunit">
    <text evidence="1">Tetramer of two alpha (regulatory) and two beta (catalytic) chains.</text>
</comment>
<comment type="subcellular location">
    <subcellularLocation>
        <location evidence="1">Cytoplasm</location>
    </subcellularLocation>
</comment>
<comment type="similarity">
    <text evidence="1">Belongs to the phosphofructokinase type A (PFKA) family. PPi-dependent PFK group II subfamily. Clade 'Long' sub-subfamily.</text>
</comment>
<comment type="sequence caution" evidence="2">
    <conflict type="erroneous gene model prediction">
        <sequence resource="EMBL-CDS" id="AAC28214"/>
    </conflict>
</comment>
<comment type="sequence caution" evidence="2">
    <conflict type="erroneous gene model prediction">
        <sequence resource="EMBL-CDS" id="CAB77872"/>
    </conflict>
</comment>